<sequence length="46" mass="5467">MKVLNSLRTAKERHPDCQIVKRKGRLYVICKSNPRFKAVQGRKKKR</sequence>
<reference key="1">
    <citation type="journal article" date="2008" name="J. Bacteriol.">
        <title>The complete genome sequence of Escherichia coli DH10B: insights into the biology of a laboratory workhorse.</title>
        <authorList>
            <person name="Durfee T."/>
            <person name="Nelson R."/>
            <person name="Baldwin S."/>
            <person name="Plunkett G. III"/>
            <person name="Burland V."/>
            <person name="Mau B."/>
            <person name="Petrosino J.F."/>
            <person name="Qin X."/>
            <person name="Muzny D.M."/>
            <person name="Ayele M."/>
            <person name="Gibbs R.A."/>
            <person name="Csorgo B."/>
            <person name="Posfai G."/>
            <person name="Weinstock G.M."/>
            <person name="Blattner F.R."/>
        </authorList>
    </citation>
    <scope>NUCLEOTIDE SEQUENCE [LARGE SCALE GENOMIC DNA]</scope>
    <source>
        <strain>K12 / DH10B</strain>
    </source>
</reference>
<evidence type="ECO:0000255" key="1">
    <source>
        <dbReference type="HAMAP-Rule" id="MF_00251"/>
    </source>
</evidence>
<evidence type="ECO:0000305" key="2"/>
<dbReference type="EMBL" id="CP000948">
    <property type="protein sequence ID" value="ACB01462.1"/>
    <property type="molecule type" value="Genomic_DNA"/>
</dbReference>
<dbReference type="SMR" id="B1XE38"/>
<dbReference type="KEGG" id="ecd:ECDH10B_0284"/>
<dbReference type="HOGENOM" id="CLU_135723_3_1_6"/>
<dbReference type="GO" id="GO:1990904">
    <property type="term" value="C:ribonucleoprotein complex"/>
    <property type="evidence" value="ECO:0007669"/>
    <property type="project" value="UniProtKB-KW"/>
</dbReference>
<dbReference type="GO" id="GO:0005840">
    <property type="term" value="C:ribosome"/>
    <property type="evidence" value="ECO:0007669"/>
    <property type="project" value="UniProtKB-KW"/>
</dbReference>
<dbReference type="GO" id="GO:0003735">
    <property type="term" value="F:structural constituent of ribosome"/>
    <property type="evidence" value="ECO:0007669"/>
    <property type="project" value="InterPro"/>
</dbReference>
<dbReference type="GO" id="GO:0006412">
    <property type="term" value="P:translation"/>
    <property type="evidence" value="ECO:0007669"/>
    <property type="project" value="UniProtKB-UniRule"/>
</dbReference>
<dbReference type="HAMAP" id="MF_00251">
    <property type="entry name" value="Ribosomal_bL36"/>
    <property type="match status" value="1"/>
</dbReference>
<dbReference type="InterPro" id="IPR000473">
    <property type="entry name" value="Ribosomal_bL36"/>
</dbReference>
<dbReference type="InterPro" id="IPR035977">
    <property type="entry name" value="Ribosomal_bL36_sp"/>
</dbReference>
<dbReference type="InterPro" id="IPR047621">
    <property type="entry name" value="Ribosomal_L36_bact"/>
</dbReference>
<dbReference type="NCBIfam" id="NF002021">
    <property type="entry name" value="PRK00831.1"/>
    <property type="match status" value="1"/>
</dbReference>
<dbReference type="NCBIfam" id="TIGR01022">
    <property type="entry name" value="rpmJ_bact"/>
    <property type="match status" value="1"/>
</dbReference>
<dbReference type="PANTHER" id="PTHR47781">
    <property type="entry name" value="50S RIBOSOMAL PROTEIN L36 2"/>
    <property type="match status" value="1"/>
</dbReference>
<dbReference type="PANTHER" id="PTHR47781:SF1">
    <property type="entry name" value="LARGE RIBOSOMAL SUBUNIT PROTEIN BL36B"/>
    <property type="match status" value="1"/>
</dbReference>
<dbReference type="Pfam" id="PF00444">
    <property type="entry name" value="Ribosomal_L36"/>
    <property type="match status" value="1"/>
</dbReference>
<dbReference type="SUPFAM" id="SSF57840">
    <property type="entry name" value="Ribosomal protein L36"/>
    <property type="match status" value="1"/>
</dbReference>
<dbReference type="PROSITE" id="PS00828">
    <property type="entry name" value="RIBOSOMAL_L36"/>
    <property type="match status" value="1"/>
</dbReference>
<comment type="similarity">
    <text evidence="1">Belongs to the bacterial ribosomal protein bL36 family.</text>
</comment>
<organism>
    <name type="scientific">Escherichia coli (strain K12 / DH10B)</name>
    <dbReference type="NCBI Taxonomy" id="316385"/>
    <lineage>
        <taxon>Bacteria</taxon>
        <taxon>Pseudomonadati</taxon>
        <taxon>Pseudomonadota</taxon>
        <taxon>Gammaproteobacteria</taxon>
        <taxon>Enterobacterales</taxon>
        <taxon>Enterobacteriaceae</taxon>
        <taxon>Escherichia</taxon>
    </lineage>
</organism>
<name>RL362_ECODH</name>
<feature type="chain" id="PRO_0000344671" description="Large ribosomal subunit protein bL36B">
    <location>
        <begin position="1"/>
        <end position="46"/>
    </location>
</feature>
<proteinExistence type="inferred from homology"/>
<accession>B1XE38</accession>
<gene>
    <name evidence="1" type="primary">rpmJ2</name>
    <name type="ordered locus">ECDH10B_0284</name>
</gene>
<keyword id="KW-0687">Ribonucleoprotein</keyword>
<keyword id="KW-0689">Ribosomal protein</keyword>
<protein>
    <recommendedName>
        <fullName evidence="1">Large ribosomal subunit protein bL36B</fullName>
    </recommendedName>
    <alternativeName>
        <fullName evidence="2">50S ribosomal protein L36 2</fullName>
    </alternativeName>
</protein>